<comment type="subunit">
    <text evidence="1">Homodimer.</text>
</comment>
<comment type="similarity">
    <text evidence="1">Belongs to the UPF0210 family.</text>
</comment>
<proteinExistence type="inferred from homology"/>
<gene>
    <name type="ordered locus">SUB1511</name>
</gene>
<name>Y1511_STRU0</name>
<sequence length="445" mass="46444">MDIRQVRETIEMIEEQHFDIRTITMGISLLDCIDPNIDRAAEKIYKKITEKASQLVAVGDDIAAELGIPIVNKRVSVTPIALIGAATDATDYLPLAKALDKAAHEIGVDFIGGFSALVQKGYQKGDEILINSIPKALAETQKVCASVNIGSTKSGINMTAVADMGRIIKETAEQSDLGAAKLVVFANAVEDNPFMAGAFHGVGEADVVINVGVSGPGVVKRALEKVKGESFDILAETVKKTAFKITRIGQLVGQMASERLGVKFGIVDLSLAPTPAVGDSVARVLEEMGLEMVGTHGTTAALALLNDAVKKGGVMACNQVGGLSGAFIPVSEDEGMIAAVQNGSLNLEKLEAMTAICSVGLDMIAIPEDTPYQTIAAMIADEAAIGVINQKTTAVRIIPKGKVGDMIEFGGLLGAAPVMAVNGHSSADFIARGGQIPAPIHSFKN</sequence>
<accession>B9DVG0</accession>
<dbReference type="EMBL" id="AM946015">
    <property type="protein sequence ID" value="CAR43243.1"/>
    <property type="molecule type" value="Genomic_DNA"/>
</dbReference>
<dbReference type="RefSeq" id="WP_015911820.1">
    <property type="nucleotide sequence ID" value="NC_012004.1"/>
</dbReference>
<dbReference type="SMR" id="B9DVG0"/>
<dbReference type="STRING" id="218495.SUB1511"/>
<dbReference type="KEGG" id="sub:SUB1511"/>
<dbReference type="eggNOG" id="COG2848">
    <property type="taxonomic scope" value="Bacteria"/>
</dbReference>
<dbReference type="HOGENOM" id="CLU_048704_0_0_9"/>
<dbReference type="OrthoDB" id="9763001at2"/>
<dbReference type="Proteomes" id="UP000000449">
    <property type="component" value="Chromosome"/>
</dbReference>
<dbReference type="CDD" id="cd08025">
    <property type="entry name" value="RNR_PFL_like_DUF711"/>
    <property type="match status" value="1"/>
</dbReference>
<dbReference type="Gene3D" id="3.20.70.20">
    <property type="match status" value="1"/>
</dbReference>
<dbReference type="HAMAP" id="MF_01221">
    <property type="entry name" value="UPF0210"/>
    <property type="match status" value="1"/>
</dbReference>
<dbReference type="InterPro" id="IPR007841">
    <property type="entry name" value="UPF0210"/>
</dbReference>
<dbReference type="NCBIfam" id="NF003700">
    <property type="entry name" value="PRK05313.1"/>
    <property type="match status" value="1"/>
</dbReference>
<dbReference type="PANTHER" id="PTHR37560:SF1">
    <property type="entry name" value="UPF0210 PROTEIN MJ1665"/>
    <property type="match status" value="1"/>
</dbReference>
<dbReference type="PANTHER" id="PTHR37560">
    <property type="entry name" value="UPF0210 PROTEIN SPR0218"/>
    <property type="match status" value="1"/>
</dbReference>
<dbReference type="Pfam" id="PF05167">
    <property type="entry name" value="DUF711"/>
    <property type="match status" value="1"/>
</dbReference>
<dbReference type="SUPFAM" id="SSF51998">
    <property type="entry name" value="PFL-like glycyl radical enzymes"/>
    <property type="match status" value="1"/>
</dbReference>
<organism>
    <name type="scientific">Streptococcus uberis (strain ATCC BAA-854 / 0140J)</name>
    <dbReference type="NCBI Taxonomy" id="218495"/>
    <lineage>
        <taxon>Bacteria</taxon>
        <taxon>Bacillati</taxon>
        <taxon>Bacillota</taxon>
        <taxon>Bacilli</taxon>
        <taxon>Lactobacillales</taxon>
        <taxon>Streptococcaceae</taxon>
        <taxon>Streptococcus</taxon>
    </lineage>
</organism>
<protein>
    <recommendedName>
        <fullName evidence="1">UPF0210 protein SUB1511</fullName>
    </recommendedName>
</protein>
<keyword id="KW-1185">Reference proteome</keyword>
<feature type="chain" id="PRO_1000164870" description="UPF0210 protein SUB1511">
    <location>
        <begin position="1"/>
        <end position="445"/>
    </location>
</feature>
<evidence type="ECO:0000255" key="1">
    <source>
        <dbReference type="HAMAP-Rule" id="MF_01221"/>
    </source>
</evidence>
<reference key="1">
    <citation type="journal article" date="2009" name="BMC Genomics">
        <title>Evidence for niche adaptation in the genome of the bovine pathogen Streptococcus uberis.</title>
        <authorList>
            <person name="Ward P.N."/>
            <person name="Holden M.T.G."/>
            <person name="Leigh J.A."/>
            <person name="Lennard N."/>
            <person name="Bignell A."/>
            <person name="Barron A."/>
            <person name="Clark L."/>
            <person name="Quail M.A."/>
            <person name="Woodward J."/>
            <person name="Barrell B.G."/>
            <person name="Egan S.A."/>
            <person name="Field T.R."/>
            <person name="Maskell D."/>
            <person name="Kehoe M."/>
            <person name="Dowson C.G."/>
            <person name="Chanter N."/>
            <person name="Whatmore A.M."/>
            <person name="Bentley S.D."/>
            <person name="Parkhill J."/>
        </authorList>
    </citation>
    <scope>NUCLEOTIDE SEQUENCE [LARGE SCALE GENOMIC DNA]</scope>
    <source>
        <strain>ATCC BAA-854 / 0140J</strain>
    </source>
</reference>